<protein>
    <recommendedName>
        <fullName evidence="1">SsrA-binding protein</fullName>
    </recommendedName>
    <alternativeName>
        <fullName evidence="1">Small protein B</fullName>
    </alternativeName>
</protein>
<feature type="chain" id="PRO_0000331080" description="SsrA-binding protein">
    <location>
        <begin position="1"/>
        <end position="165"/>
    </location>
</feature>
<sequence>MIAKVSNKSNKSNKKEAVFKRLAENRYAKFQYEISETIEAGIELLGTEVKSIRNGNVNLRDGYCSFRDGEILLLNVHISPHKNVGSFFNHDPLRNRKLLLHKKEIFKLKSNTEKKGLTIIPLSIYLKGSWIKLTIGIGKGKKLHDKRQADKQKDIKREIKTALKR</sequence>
<comment type="function">
    <text evidence="1">Required for rescue of stalled ribosomes mediated by trans-translation. Binds to transfer-messenger RNA (tmRNA), required for stable association of tmRNA with ribosomes. tmRNA and SmpB together mimic tRNA shape, replacing the anticodon stem-loop with SmpB. tmRNA is encoded by the ssrA gene; the 2 termini fold to resemble tRNA(Ala) and it encodes a 'tag peptide', a short internal open reading frame. During trans-translation Ala-aminoacylated tmRNA acts like a tRNA, entering the A-site of stalled ribosomes, displacing the stalled mRNA. The ribosome then switches to translate the ORF on the tmRNA; the nascent peptide is terminated with the 'tag peptide' encoded by the tmRNA and targeted for degradation. The ribosome is freed to recommence translation, which seems to be the essential function of trans-translation.</text>
</comment>
<comment type="subcellular location">
    <subcellularLocation>
        <location evidence="1">Cytoplasm</location>
    </subcellularLocation>
    <text evidence="1">The tmRNA-SmpB complex associates with stalled 70S ribosomes.</text>
</comment>
<comment type="similarity">
    <text evidence="1">Belongs to the SmpB family.</text>
</comment>
<name>SSRP_PROM5</name>
<keyword id="KW-0963">Cytoplasm</keyword>
<keyword id="KW-0694">RNA-binding</keyword>
<dbReference type="EMBL" id="CP000552">
    <property type="protein sequence ID" value="ABM73012.1"/>
    <property type="molecule type" value="Genomic_DNA"/>
</dbReference>
<dbReference type="RefSeq" id="WP_011821097.1">
    <property type="nucleotide sequence ID" value="NC_008817.1"/>
</dbReference>
<dbReference type="SMR" id="A2BZ01"/>
<dbReference type="STRING" id="167542.P9515_18051"/>
<dbReference type="GeneID" id="60200575"/>
<dbReference type="KEGG" id="pmc:P9515_18051"/>
<dbReference type="eggNOG" id="COG0691">
    <property type="taxonomic scope" value="Bacteria"/>
</dbReference>
<dbReference type="HOGENOM" id="CLU_108953_0_1_3"/>
<dbReference type="Proteomes" id="UP000001589">
    <property type="component" value="Chromosome"/>
</dbReference>
<dbReference type="GO" id="GO:0005829">
    <property type="term" value="C:cytosol"/>
    <property type="evidence" value="ECO:0007669"/>
    <property type="project" value="TreeGrafter"/>
</dbReference>
<dbReference type="GO" id="GO:0003723">
    <property type="term" value="F:RNA binding"/>
    <property type="evidence" value="ECO:0007669"/>
    <property type="project" value="UniProtKB-UniRule"/>
</dbReference>
<dbReference type="GO" id="GO:0070929">
    <property type="term" value="P:trans-translation"/>
    <property type="evidence" value="ECO:0007669"/>
    <property type="project" value="UniProtKB-UniRule"/>
</dbReference>
<dbReference type="CDD" id="cd09294">
    <property type="entry name" value="SmpB"/>
    <property type="match status" value="1"/>
</dbReference>
<dbReference type="Gene3D" id="2.40.280.10">
    <property type="match status" value="1"/>
</dbReference>
<dbReference type="HAMAP" id="MF_00023">
    <property type="entry name" value="SmpB"/>
    <property type="match status" value="1"/>
</dbReference>
<dbReference type="InterPro" id="IPR023620">
    <property type="entry name" value="SmpB"/>
</dbReference>
<dbReference type="InterPro" id="IPR000037">
    <property type="entry name" value="SsrA-bd_prot"/>
</dbReference>
<dbReference type="InterPro" id="IPR020081">
    <property type="entry name" value="SsrA-bd_prot_CS"/>
</dbReference>
<dbReference type="NCBIfam" id="NF003843">
    <property type="entry name" value="PRK05422.1"/>
    <property type="match status" value="1"/>
</dbReference>
<dbReference type="NCBIfam" id="TIGR00086">
    <property type="entry name" value="smpB"/>
    <property type="match status" value="1"/>
</dbReference>
<dbReference type="PANTHER" id="PTHR30308:SF2">
    <property type="entry name" value="SSRA-BINDING PROTEIN"/>
    <property type="match status" value="1"/>
</dbReference>
<dbReference type="PANTHER" id="PTHR30308">
    <property type="entry name" value="TMRNA-BINDING COMPONENT OF TRANS-TRANSLATION TAGGING COMPLEX"/>
    <property type="match status" value="1"/>
</dbReference>
<dbReference type="Pfam" id="PF01668">
    <property type="entry name" value="SmpB"/>
    <property type="match status" value="1"/>
</dbReference>
<dbReference type="SUPFAM" id="SSF74982">
    <property type="entry name" value="Small protein B (SmpB)"/>
    <property type="match status" value="1"/>
</dbReference>
<dbReference type="PROSITE" id="PS01317">
    <property type="entry name" value="SSRP"/>
    <property type="match status" value="1"/>
</dbReference>
<proteinExistence type="inferred from homology"/>
<gene>
    <name evidence="1" type="primary">smpB</name>
    <name type="ordered locus">P9515_18051</name>
</gene>
<accession>A2BZ01</accession>
<evidence type="ECO:0000255" key="1">
    <source>
        <dbReference type="HAMAP-Rule" id="MF_00023"/>
    </source>
</evidence>
<reference key="1">
    <citation type="journal article" date="2007" name="PLoS Genet.">
        <title>Patterns and implications of gene gain and loss in the evolution of Prochlorococcus.</title>
        <authorList>
            <person name="Kettler G.C."/>
            <person name="Martiny A.C."/>
            <person name="Huang K."/>
            <person name="Zucker J."/>
            <person name="Coleman M.L."/>
            <person name="Rodrigue S."/>
            <person name="Chen F."/>
            <person name="Lapidus A."/>
            <person name="Ferriera S."/>
            <person name="Johnson J."/>
            <person name="Steglich C."/>
            <person name="Church G.M."/>
            <person name="Richardson P."/>
            <person name="Chisholm S.W."/>
        </authorList>
    </citation>
    <scope>NUCLEOTIDE SEQUENCE [LARGE SCALE GENOMIC DNA]</scope>
    <source>
        <strain>MIT 9515</strain>
    </source>
</reference>
<organism>
    <name type="scientific">Prochlorococcus marinus (strain MIT 9515)</name>
    <dbReference type="NCBI Taxonomy" id="167542"/>
    <lineage>
        <taxon>Bacteria</taxon>
        <taxon>Bacillati</taxon>
        <taxon>Cyanobacteriota</taxon>
        <taxon>Cyanophyceae</taxon>
        <taxon>Synechococcales</taxon>
        <taxon>Prochlorococcaceae</taxon>
        <taxon>Prochlorococcus</taxon>
    </lineage>
</organism>